<comment type="function">
    <text>Transports C5-C7 oxodicarboxylates across the inner membranes of mitochondria. Can transport 2-oxoadipate, 2-oxoglutarate, adipate, glutarate, 2-oxopimelate, oxaloacetate, citrate and malate. The main physiological role is probably to supply 2-oxoadipate and 2-oxoglutarate from the mitochondrial matrix to the cytosol where they are used in the biosynthesis of lysine and glutamate, respectively, and in lysine catabolism.</text>
</comment>
<comment type="subcellular location">
    <subcellularLocation>
        <location>Mitochondrion inner membrane</location>
        <topology>Multi-pass membrane protein</topology>
    </subcellularLocation>
</comment>
<comment type="similarity">
    <text evidence="2">Belongs to the mitochondrial carrier (TC 2.A.29) family.</text>
</comment>
<organism>
    <name type="scientific">Saccharomyces cerevisiae (strain ATCC 204508 / S288c)</name>
    <name type="common">Baker's yeast</name>
    <dbReference type="NCBI Taxonomy" id="559292"/>
    <lineage>
        <taxon>Eukaryota</taxon>
        <taxon>Fungi</taxon>
        <taxon>Dikarya</taxon>
        <taxon>Ascomycota</taxon>
        <taxon>Saccharomycotina</taxon>
        <taxon>Saccharomycetes</taxon>
        <taxon>Saccharomycetales</taxon>
        <taxon>Saccharomycetaceae</taxon>
        <taxon>Saccharomyces</taxon>
    </lineage>
</organism>
<proteinExistence type="evidence at protein level"/>
<accession>Q99297</accession>
<accession>D6W2S7</accession>
<accession>O13594</accession>
<protein>
    <recommendedName>
        <fullName>Mitochondrial 2-oxodicarboxylate carrier 2</fullName>
    </recommendedName>
</protein>
<evidence type="ECO:0000255" key="1"/>
<evidence type="ECO:0000305" key="2"/>
<name>ODC2_YEAST</name>
<keyword id="KW-0472">Membrane</keyword>
<keyword id="KW-0496">Mitochondrion</keyword>
<keyword id="KW-0999">Mitochondrion inner membrane</keyword>
<keyword id="KW-1185">Reference proteome</keyword>
<keyword id="KW-0677">Repeat</keyword>
<keyword id="KW-0812">Transmembrane</keyword>
<keyword id="KW-1133">Transmembrane helix</keyword>
<keyword id="KW-0813">Transport</keyword>
<gene>
    <name type="primary">ODC2</name>
    <name type="ordered locus">YOR222W</name>
    <name type="ORF">YOR50-12</name>
</gene>
<sequence>MSSDSNAKPLPFIYQFISGAVAGISELTVMYPLDVVKTRFQLEVTTPTAAAVGKQVERYNGVIDCLKKIVKKEGFSRLYRGISSPMLMEAPKRATKFACNDQYQKIFKNLFNTNETTQKISIAAGASAGMTEAAVIVPFELIKIRMQDVKSSYLGPMDCLKKTIKNEGIMGLYKGIESTMWRNALWNGGYFGVIYQVRNSMPVAKTKGQKTRNDLIAGAIGGTVGTMLNTPFDVVKSRIQSVDAVSSAVKKYNWCLPSLLVIYREEGFRALYKGFVPKVCRLAPGGSLMLVVFTGMMNFFRDLKYGH</sequence>
<feature type="chain" id="PRO_0000090649" description="Mitochondrial 2-oxodicarboxylate carrier 2">
    <location>
        <begin position="1"/>
        <end position="307"/>
    </location>
</feature>
<feature type="transmembrane region" description="Helical; Name=1" evidence="1">
    <location>
        <begin position="10"/>
        <end position="30"/>
    </location>
</feature>
<feature type="transmembrane region" description="Helical; Name=2" evidence="1">
    <location>
        <begin position="76"/>
        <end position="95"/>
    </location>
</feature>
<feature type="transmembrane region" description="Helical; Name=3" evidence="1">
    <location>
        <begin position="122"/>
        <end position="142"/>
    </location>
</feature>
<feature type="transmembrane region" description="Helical; Name=4" evidence="1">
    <location>
        <begin position="171"/>
        <end position="191"/>
    </location>
</feature>
<feature type="transmembrane region" description="Helical; Name=5" evidence="1">
    <location>
        <begin position="215"/>
        <end position="235"/>
    </location>
</feature>
<feature type="transmembrane region" description="Helical; Name=6" evidence="1">
    <location>
        <begin position="280"/>
        <end position="300"/>
    </location>
</feature>
<feature type="repeat" description="Solcar 1">
    <location>
        <begin position="10"/>
        <end position="106"/>
    </location>
</feature>
<feature type="repeat" description="Solcar 2">
    <location>
        <begin position="116"/>
        <end position="200"/>
    </location>
</feature>
<feature type="repeat" description="Solcar 3">
    <location>
        <begin position="209"/>
        <end position="299"/>
    </location>
</feature>
<dbReference type="EMBL" id="X92441">
    <property type="protein sequence ID" value="CAA63185.1"/>
    <property type="molecule type" value="Genomic_DNA"/>
</dbReference>
<dbReference type="EMBL" id="Z75130">
    <property type="protein sequence ID" value="CAA99440.1"/>
    <property type="molecule type" value="Genomic_DNA"/>
</dbReference>
<dbReference type="EMBL" id="Z75131">
    <property type="protein sequence ID" value="CAA99442.2"/>
    <property type="molecule type" value="Genomic_DNA"/>
</dbReference>
<dbReference type="EMBL" id="BK006948">
    <property type="protein sequence ID" value="DAA10993.1"/>
    <property type="molecule type" value="Genomic_DNA"/>
</dbReference>
<dbReference type="PIR" id="S60949">
    <property type="entry name" value="S60949"/>
</dbReference>
<dbReference type="RefSeq" id="NP_014865.1">
    <property type="nucleotide sequence ID" value="NM_001183641.1"/>
</dbReference>
<dbReference type="SMR" id="Q99297"/>
<dbReference type="BioGRID" id="34616">
    <property type="interactions" value="104"/>
</dbReference>
<dbReference type="DIP" id="DIP-5386N"/>
<dbReference type="FunCoup" id="Q99297">
    <property type="interactions" value="284"/>
</dbReference>
<dbReference type="IntAct" id="Q99297">
    <property type="interactions" value="1"/>
</dbReference>
<dbReference type="STRING" id="4932.YOR222W"/>
<dbReference type="TCDB" id="2.A.29.2.5">
    <property type="family name" value="the mitochondrial carrier (mc) family"/>
</dbReference>
<dbReference type="GlyGen" id="Q99297">
    <property type="glycosylation" value="1 site"/>
</dbReference>
<dbReference type="PaxDb" id="4932-YOR222W"/>
<dbReference type="PeptideAtlas" id="Q99297"/>
<dbReference type="EnsemblFungi" id="YOR222W_mRNA">
    <property type="protein sequence ID" value="YOR222W"/>
    <property type="gene ID" value="YOR222W"/>
</dbReference>
<dbReference type="GeneID" id="854397"/>
<dbReference type="KEGG" id="sce:YOR222W"/>
<dbReference type="AGR" id="SGD:S000005748"/>
<dbReference type="SGD" id="S000005748">
    <property type="gene designation" value="ODC2"/>
</dbReference>
<dbReference type="VEuPathDB" id="FungiDB:YOR222W"/>
<dbReference type="eggNOG" id="KOG0754">
    <property type="taxonomic scope" value="Eukaryota"/>
</dbReference>
<dbReference type="GeneTree" id="ENSGT00730000111119"/>
<dbReference type="HOGENOM" id="CLU_015166_5_2_1"/>
<dbReference type="InParanoid" id="Q99297"/>
<dbReference type="OMA" id="RDATPTC"/>
<dbReference type="OrthoDB" id="434783at2759"/>
<dbReference type="BioCyc" id="YEAST:G3O-33721-MONOMER"/>
<dbReference type="BioGRID-ORCS" id="854397">
    <property type="hits" value="0 hits in 10 CRISPR screens"/>
</dbReference>
<dbReference type="CD-CODE" id="E03F929F">
    <property type="entry name" value="Stress granule"/>
</dbReference>
<dbReference type="PRO" id="PR:Q99297"/>
<dbReference type="Proteomes" id="UP000002311">
    <property type="component" value="Chromosome XV"/>
</dbReference>
<dbReference type="RNAct" id="Q99297">
    <property type="molecule type" value="protein"/>
</dbReference>
<dbReference type="GO" id="GO:0005743">
    <property type="term" value="C:mitochondrial inner membrane"/>
    <property type="evidence" value="ECO:0000314"/>
    <property type="project" value="SGD"/>
</dbReference>
<dbReference type="GO" id="GO:0005739">
    <property type="term" value="C:mitochondrion"/>
    <property type="evidence" value="ECO:0007005"/>
    <property type="project" value="SGD"/>
</dbReference>
<dbReference type="GO" id="GO:0005471">
    <property type="term" value="F:ATP:ADP antiporter activity"/>
    <property type="evidence" value="ECO:0007669"/>
    <property type="project" value="InterPro"/>
</dbReference>
<dbReference type="GO" id="GO:0005310">
    <property type="term" value="F:dicarboxylic acid transmembrane transporter activity"/>
    <property type="evidence" value="ECO:0000314"/>
    <property type="project" value="SGD"/>
</dbReference>
<dbReference type="GO" id="GO:0015183">
    <property type="term" value="F:L-aspartate transmembrane transporter activity"/>
    <property type="evidence" value="ECO:0000318"/>
    <property type="project" value="GO_Central"/>
</dbReference>
<dbReference type="GO" id="GO:0005313">
    <property type="term" value="F:L-glutamate transmembrane transporter activity"/>
    <property type="evidence" value="ECO:0000318"/>
    <property type="project" value="GO_Central"/>
</dbReference>
<dbReference type="GO" id="GO:0015810">
    <property type="term" value="P:aspartate transmembrane transport"/>
    <property type="evidence" value="ECO:0000318"/>
    <property type="project" value="GO_Central"/>
</dbReference>
<dbReference type="GO" id="GO:0015813">
    <property type="term" value="P:L-glutamate transmembrane transport"/>
    <property type="evidence" value="ECO:0000318"/>
    <property type="project" value="GO_Central"/>
</dbReference>
<dbReference type="GO" id="GO:0043490">
    <property type="term" value="P:malate-aspartate shuttle"/>
    <property type="evidence" value="ECO:0000318"/>
    <property type="project" value="GO_Central"/>
</dbReference>
<dbReference type="GO" id="GO:0140021">
    <property type="term" value="P:mitochondrial ADP transmembrane transport"/>
    <property type="evidence" value="ECO:0007669"/>
    <property type="project" value="InterPro"/>
</dbReference>
<dbReference type="GO" id="GO:1990544">
    <property type="term" value="P:mitochondrial ATP transmembrane transport"/>
    <property type="evidence" value="ECO:0007669"/>
    <property type="project" value="InterPro"/>
</dbReference>
<dbReference type="GO" id="GO:0006839">
    <property type="term" value="P:mitochondrial transport"/>
    <property type="evidence" value="ECO:0000314"/>
    <property type="project" value="SGD"/>
</dbReference>
<dbReference type="FunFam" id="1.50.40.10:FF:000034">
    <property type="entry name" value="Mitochondrial 2-oxodicarboxylate carrier"/>
    <property type="match status" value="1"/>
</dbReference>
<dbReference type="Gene3D" id="1.50.40.10">
    <property type="entry name" value="Mitochondrial carrier domain"/>
    <property type="match status" value="1"/>
</dbReference>
<dbReference type="InterPro" id="IPR002113">
    <property type="entry name" value="ADT_euk_type"/>
</dbReference>
<dbReference type="InterPro" id="IPR002067">
    <property type="entry name" value="Mit_carrier"/>
</dbReference>
<dbReference type="InterPro" id="IPR051752">
    <property type="entry name" value="Mito_2-oxodicarb_carrier"/>
</dbReference>
<dbReference type="InterPro" id="IPR018108">
    <property type="entry name" value="Mitochondrial_sb/sol_carrier"/>
</dbReference>
<dbReference type="InterPro" id="IPR023395">
    <property type="entry name" value="Mt_carrier_dom_sf"/>
</dbReference>
<dbReference type="PANTHER" id="PTHR46356">
    <property type="entry name" value="MITOCHONDRIAL 2-OXODICARBOXYLATE CARRIER"/>
    <property type="match status" value="1"/>
</dbReference>
<dbReference type="PANTHER" id="PTHR46356:SF1">
    <property type="entry name" value="MITOCHONDRIAL 2-OXODICARBOXYLATE CARRIER"/>
    <property type="match status" value="1"/>
</dbReference>
<dbReference type="Pfam" id="PF00153">
    <property type="entry name" value="Mito_carr"/>
    <property type="match status" value="3"/>
</dbReference>
<dbReference type="PRINTS" id="PR00927">
    <property type="entry name" value="ADPTRNSLCASE"/>
</dbReference>
<dbReference type="PRINTS" id="PR00926">
    <property type="entry name" value="MITOCARRIER"/>
</dbReference>
<dbReference type="SUPFAM" id="SSF103506">
    <property type="entry name" value="Mitochondrial carrier"/>
    <property type="match status" value="1"/>
</dbReference>
<dbReference type="PROSITE" id="PS50920">
    <property type="entry name" value="SOLCAR"/>
    <property type="match status" value="3"/>
</dbReference>
<reference key="1">
    <citation type="journal article" date="1996" name="Yeast">
        <title>Sequence and analysis of a 33 kb fragment from the right arm of chromosome XV of the yeast Saccharomyces cerevisiae.</title>
        <authorList>
            <person name="Galisson F."/>
            <person name="Dujon B."/>
        </authorList>
    </citation>
    <scope>NUCLEOTIDE SEQUENCE [GENOMIC DNA]</scope>
    <source>
        <strain>ATCC 96604 / S288c / FY1679</strain>
    </source>
</reference>
<reference key="2">
    <citation type="journal article" date="1997" name="Nature">
        <title>The nucleotide sequence of Saccharomyces cerevisiae chromosome XV.</title>
        <authorList>
            <person name="Dujon B."/>
            <person name="Albermann K."/>
            <person name="Aldea M."/>
            <person name="Alexandraki D."/>
            <person name="Ansorge W."/>
            <person name="Arino J."/>
            <person name="Benes V."/>
            <person name="Bohn C."/>
            <person name="Bolotin-Fukuhara M."/>
            <person name="Bordonne R."/>
            <person name="Boyer J."/>
            <person name="Camasses A."/>
            <person name="Casamayor A."/>
            <person name="Casas C."/>
            <person name="Cheret G."/>
            <person name="Cziepluch C."/>
            <person name="Daignan-Fornier B."/>
            <person name="Dang V.-D."/>
            <person name="de Haan M."/>
            <person name="Delius H."/>
            <person name="Durand P."/>
            <person name="Fairhead C."/>
            <person name="Feldmann H."/>
            <person name="Gaillon L."/>
            <person name="Galisson F."/>
            <person name="Gamo F.-J."/>
            <person name="Gancedo C."/>
            <person name="Goffeau A."/>
            <person name="Goulding S.E."/>
            <person name="Grivell L.A."/>
            <person name="Habbig B."/>
            <person name="Hand N.J."/>
            <person name="Hani J."/>
            <person name="Hattenhorst U."/>
            <person name="Hebling U."/>
            <person name="Hernando Y."/>
            <person name="Herrero E."/>
            <person name="Heumann K."/>
            <person name="Hiesel R."/>
            <person name="Hilger F."/>
            <person name="Hofmann B."/>
            <person name="Hollenberg C.P."/>
            <person name="Hughes B."/>
            <person name="Jauniaux J.-C."/>
            <person name="Kalogeropoulos A."/>
            <person name="Katsoulou C."/>
            <person name="Kordes E."/>
            <person name="Lafuente M.J."/>
            <person name="Landt O."/>
            <person name="Louis E.J."/>
            <person name="Maarse A.C."/>
            <person name="Madania A."/>
            <person name="Mannhaupt G."/>
            <person name="Marck C."/>
            <person name="Martin R.P."/>
            <person name="Mewes H.-W."/>
            <person name="Michaux G."/>
            <person name="Paces V."/>
            <person name="Parle-McDermott A.G."/>
            <person name="Pearson B.M."/>
            <person name="Perrin A."/>
            <person name="Pettersson B."/>
            <person name="Poch O."/>
            <person name="Pohl T.M."/>
            <person name="Poirey R."/>
            <person name="Portetelle D."/>
            <person name="Pujol A."/>
            <person name="Purnelle B."/>
            <person name="Ramezani Rad M."/>
            <person name="Rechmann S."/>
            <person name="Schwager C."/>
            <person name="Schweizer M."/>
            <person name="Sor F."/>
            <person name="Sterky F."/>
            <person name="Tarassov I.A."/>
            <person name="Teodoru C."/>
            <person name="Tettelin H."/>
            <person name="Thierry A."/>
            <person name="Tobiasch E."/>
            <person name="Tzermia M."/>
            <person name="Uhlen M."/>
            <person name="Unseld M."/>
            <person name="Valens M."/>
            <person name="Vandenbol M."/>
            <person name="Vetter I."/>
            <person name="Vlcek C."/>
            <person name="Voet M."/>
            <person name="Volckaert G."/>
            <person name="Voss H."/>
            <person name="Wambutt R."/>
            <person name="Wedler H."/>
            <person name="Wiemann S."/>
            <person name="Winsor B."/>
            <person name="Wolfe K.H."/>
            <person name="Zollner A."/>
            <person name="Zumstein E."/>
            <person name="Kleine K."/>
        </authorList>
    </citation>
    <scope>NUCLEOTIDE SEQUENCE [LARGE SCALE GENOMIC DNA]</scope>
    <source>
        <strain>ATCC 204508 / S288c</strain>
    </source>
</reference>
<reference key="3">
    <citation type="journal article" date="2014" name="G3 (Bethesda)">
        <title>The reference genome sequence of Saccharomyces cerevisiae: Then and now.</title>
        <authorList>
            <person name="Engel S.R."/>
            <person name="Dietrich F.S."/>
            <person name="Fisk D.G."/>
            <person name="Binkley G."/>
            <person name="Balakrishnan R."/>
            <person name="Costanzo M.C."/>
            <person name="Dwight S.S."/>
            <person name="Hitz B.C."/>
            <person name="Karra K."/>
            <person name="Nash R.S."/>
            <person name="Weng S."/>
            <person name="Wong E.D."/>
            <person name="Lloyd P."/>
            <person name="Skrzypek M.S."/>
            <person name="Miyasato S.R."/>
            <person name="Simison M."/>
            <person name="Cherry J.M."/>
        </authorList>
    </citation>
    <scope>GENOME REANNOTATION</scope>
    <source>
        <strain>ATCC 204508 / S288c</strain>
    </source>
</reference>
<reference key="4">
    <citation type="journal article" date="2001" name="J. Biol. Chem.">
        <title>Identification in Saccharomyces cerevisiae of two isoforms of a novel mitochondrial transporter for 2-oxoadipate and 2-oxoglutarate.</title>
        <authorList>
            <person name="Palmieri L."/>
            <person name="Agrimi G."/>
            <person name="Runswick M.J."/>
            <person name="Fearnley I.M."/>
            <person name="Palmieri F."/>
            <person name="Walker J.E."/>
        </authorList>
    </citation>
    <scope>CHARACTERIZATION</scope>
</reference>